<protein>
    <recommendedName>
        <fullName>Rac-like GTP-binding protein RHO1</fullName>
    </recommendedName>
    <alternativeName>
        <fullName>GTPase protein ROP1</fullName>
    </alternativeName>
</protein>
<reference key="1">
    <citation type="journal article" date="1993" name="Proc. Natl. Acad. Sci. U.S.A.">
        <title>Molecular cloning and characterization of rho, a ras-related small GTP-binding protein from the garden pea.</title>
        <authorList>
            <person name="Yang Z."/>
            <person name="Watson J.C."/>
        </authorList>
    </citation>
    <scope>NUCLEOTIDE SEQUENCE [MRNA]</scope>
    <source>
        <strain>cv. Alaska</strain>
    </source>
</reference>
<reference key="2">
    <citation type="journal article" date="1996" name="Plant Cell">
        <title>Localization of a Rho GTPase implies a role in tip growth and movement of the generative cell in pollen tubes.</title>
        <authorList>
            <person name="Lin Y."/>
            <person name="Wang Y."/>
            <person name="Zhu J.-K."/>
            <person name="Yang Z."/>
        </authorList>
    </citation>
    <scope>FUNCTION</scope>
    <scope>TISSUE SPECIFICITY</scope>
</reference>
<comment type="function">
    <text evidence="1 3">Inactive GDP-bound Rho GTPases reside in the cytosol, are found in a complex with Rho GDP-dissociation inhibitors (Rho GDIs), and are released from the GDI protein in order to translocate to membranes upon activation (By similarity). May be involved in cell polarity control during the actin-dependent tip growth of pollen tubes.</text>
</comment>
<comment type="subcellular location">
    <subcellularLocation>
        <location evidence="1">Cytoplasm</location>
    </subcellularLocation>
    <subcellularLocation>
        <location evidence="1">Membrane</location>
        <topology evidence="1">Peripheral membrane protein</topology>
    </subcellularLocation>
    <text>Associated with the membrane when activated.</text>
</comment>
<comment type="tissue specificity">
    <text evidence="3">Expressed at the tip of pollen tubes.</text>
</comment>
<comment type="similarity">
    <text evidence="4">Belongs to the small GTPase superfamily. Rho family.</text>
</comment>
<dbReference type="EMBL" id="L19093">
    <property type="protein sequence ID" value="AAA96980.1"/>
    <property type="molecule type" value="mRNA"/>
</dbReference>
<dbReference type="PIR" id="A47525">
    <property type="entry name" value="A47525"/>
</dbReference>
<dbReference type="SMR" id="Q35638"/>
<dbReference type="EnsemblPlants" id="Psat4g102000.1">
    <property type="protein sequence ID" value="Psat4g102000.1.cds"/>
    <property type="gene ID" value="Psat4g102000"/>
</dbReference>
<dbReference type="EnsemblPlants" id="Psat4g102000.2">
    <property type="protein sequence ID" value="Psat4g102000.2.cds"/>
    <property type="gene ID" value="Psat4g102000"/>
</dbReference>
<dbReference type="EnsemblPlants" id="Psat4g102000.3">
    <property type="protein sequence ID" value="Psat4g102000.3.cds"/>
    <property type="gene ID" value="Psat4g102000"/>
</dbReference>
<dbReference type="Gramene" id="Psat4g102000.1">
    <property type="protein sequence ID" value="Psat4g102000.1.cds"/>
    <property type="gene ID" value="Psat4g102000"/>
</dbReference>
<dbReference type="Gramene" id="Psat4g102000.2">
    <property type="protein sequence ID" value="Psat4g102000.2.cds"/>
    <property type="gene ID" value="Psat4g102000"/>
</dbReference>
<dbReference type="Gramene" id="Psat4g102000.3">
    <property type="protein sequence ID" value="Psat4g102000.3.cds"/>
    <property type="gene ID" value="Psat4g102000"/>
</dbReference>
<dbReference type="OrthoDB" id="8830751at2759"/>
<dbReference type="GO" id="GO:0005737">
    <property type="term" value="C:cytoplasm"/>
    <property type="evidence" value="ECO:0007669"/>
    <property type="project" value="UniProtKB-SubCell"/>
</dbReference>
<dbReference type="GO" id="GO:0016020">
    <property type="term" value="C:membrane"/>
    <property type="evidence" value="ECO:0007669"/>
    <property type="project" value="UniProtKB-SubCell"/>
</dbReference>
<dbReference type="GO" id="GO:0005525">
    <property type="term" value="F:GTP binding"/>
    <property type="evidence" value="ECO:0007669"/>
    <property type="project" value="UniProtKB-KW"/>
</dbReference>
<dbReference type="GO" id="GO:0003924">
    <property type="term" value="F:GTPase activity"/>
    <property type="evidence" value="ECO:0007669"/>
    <property type="project" value="InterPro"/>
</dbReference>
<dbReference type="GO" id="GO:0007264">
    <property type="term" value="P:small GTPase-mediated signal transduction"/>
    <property type="evidence" value="ECO:0007669"/>
    <property type="project" value="InterPro"/>
</dbReference>
<dbReference type="CDD" id="cd04133">
    <property type="entry name" value="Rop_like"/>
    <property type="match status" value="1"/>
</dbReference>
<dbReference type="FunFam" id="3.40.50.300:FF:000336">
    <property type="entry name" value="rac-like GTP-binding protein RHO1"/>
    <property type="match status" value="1"/>
</dbReference>
<dbReference type="Gene3D" id="3.40.50.300">
    <property type="entry name" value="P-loop containing nucleotide triphosphate hydrolases"/>
    <property type="match status" value="1"/>
</dbReference>
<dbReference type="InterPro" id="IPR027417">
    <property type="entry name" value="P-loop_NTPase"/>
</dbReference>
<dbReference type="InterPro" id="IPR005225">
    <property type="entry name" value="Small_GTP-bd"/>
</dbReference>
<dbReference type="InterPro" id="IPR001806">
    <property type="entry name" value="Small_GTPase"/>
</dbReference>
<dbReference type="InterPro" id="IPR003578">
    <property type="entry name" value="Small_GTPase_Rho"/>
</dbReference>
<dbReference type="NCBIfam" id="TIGR00231">
    <property type="entry name" value="small_GTP"/>
    <property type="match status" value="1"/>
</dbReference>
<dbReference type="PANTHER" id="PTHR24072">
    <property type="entry name" value="RHO FAMILY GTPASE"/>
    <property type="match status" value="1"/>
</dbReference>
<dbReference type="Pfam" id="PF00071">
    <property type="entry name" value="Ras"/>
    <property type="match status" value="1"/>
</dbReference>
<dbReference type="PRINTS" id="PR00449">
    <property type="entry name" value="RASTRNSFRMNG"/>
</dbReference>
<dbReference type="SMART" id="SM00175">
    <property type="entry name" value="RAB"/>
    <property type="match status" value="1"/>
</dbReference>
<dbReference type="SMART" id="SM00173">
    <property type="entry name" value="RAS"/>
    <property type="match status" value="1"/>
</dbReference>
<dbReference type="SMART" id="SM00174">
    <property type="entry name" value="RHO"/>
    <property type="match status" value="1"/>
</dbReference>
<dbReference type="SUPFAM" id="SSF52540">
    <property type="entry name" value="P-loop containing nucleoside triphosphate hydrolases"/>
    <property type="match status" value="1"/>
</dbReference>
<dbReference type="PROSITE" id="PS51420">
    <property type="entry name" value="RHO"/>
    <property type="match status" value="1"/>
</dbReference>
<name>RHO1_PEA</name>
<gene>
    <name type="primary">RHO1</name>
</gene>
<accession>Q35638</accession>
<proteinExistence type="evidence at transcript level"/>
<keyword id="KW-0963">Cytoplasm</keyword>
<keyword id="KW-0342">GTP-binding</keyword>
<keyword id="KW-0449">Lipoprotein</keyword>
<keyword id="KW-0472">Membrane</keyword>
<keyword id="KW-0488">Methylation</keyword>
<keyword id="KW-0547">Nucleotide-binding</keyword>
<keyword id="KW-0636">Prenylation</keyword>
<feature type="chain" id="PRO_0000198931" description="Rac-like GTP-binding protein RHO1">
    <location>
        <begin position="1"/>
        <end position="194"/>
    </location>
</feature>
<feature type="propeptide" id="PRO_0000227593" description="Removed in mature form" evidence="2">
    <location>
        <begin position="195"/>
        <end position="197"/>
    </location>
</feature>
<feature type="short sequence motif" description="Effector region" evidence="2">
    <location>
        <begin position="35"/>
        <end position="43"/>
    </location>
</feature>
<feature type="binding site" evidence="1">
    <location>
        <begin position="13"/>
        <end position="20"/>
    </location>
    <ligand>
        <name>GTP</name>
        <dbReference type="ChEBI" id="CHEBI:37565"/>
    </ligand>
</feature>
<feature type="binding site" evidence="1">
    <location>
        <begin position="60"/>
        <end position="64"/>
    </location>
    <ligand>
        <name>GTP</name>
        <dbReference type="ChEBI" id="CHEBI:37565"/>
    </ligand>
</feature>
<feature type="binding site" evidence="1">
    <location>
        <begin position="118"/>
        <end position="121"/>
    </location>
    <ligand>
        <name>GTP</name>
        <dbReference type="ChEBI" id="CHEBI:37565"/>
    </ligand>
</feature>
<feature type="modified residue" description="Cysteine methyl ester" evidence="2">
    <location>
        <position position="194"/>
    </location>
</feature>
<feature type="lipid moiety-binding region" description="S-geranylgeranyl cysteine" evidence="2">
    <location>
        <position position="194"/>
    </location>
</feature>
<sequence length="197" mass="21630">MSASRFIKCVTVGDGAVGKTCLLISYTSNTFPTDYVPTVFDNFSANVVVNGSTVNLGLWDTAGQEDYNRLRPLSYRGADVFILAFSLISKASYENVSKKWIPELKHYAPGVPIILVGTKLDLRDDKQFFVDHPGAVPITTAQGEELRKLINAPAYIECSSKSQQNVKAVFDAAIRVVLQPPKQKKKKSKAQKACSIL</sequence>
<organism>
    <name type="scientific">Pisum sativum</name>
    <name type="common">Garden pea</name>
    <name type="synonym">Lathyrus oleraceus</name>
    <dbReference type="NCBI Taxonomy" id="3888"/>
    <lineage>
        <taxon>Eukaryota</taxon>
        <taxon>Viridiplantae</taxon>
        <taxon>Streptophyta</taxon>
        <taxon>Embryophyta</taxon>
        <taxon>Tracheophyta</taxon>
        <taxon>Spermatophyta</taxon>
        <taxon>Magnoliopsida</taxon>
        <taxon>eudicotyledons</taxon>
        <taxon>Gunneridae</taxon>
        <taxon>Pentapetalae</taxon>
        <taxon>rosids</taxon>
        <taxon>fabids</taxon>
        <taxon>Fabales</taxon>
        <taxon>Fabaceae</taxon>
        <taxon>Papilionoideae</taxon>
        <taxon>50 kb inversion clade</taxon>
        <taxon>NPAAA clade</taxon>
        <taxon>Hologalegina</taxon>
        <taxon>IRL clade</taxon>
        <taxon>Fabeae</taxon>
        <taxon>Pisum</taxon>
    </lineage>
</organism>
<evidence type="ECO:0000250" key="1"/>
<evidence type="ECO:0000255" key="2"/>
<evidence type="ECO:0000269" key="3">
    <source>
    </source>
</evidence>
<evidence type="ECO:0000305" key="4"/>